<sequence>MKKVTAMLFSMAVGLNAVSMAAKAKASEEQETDVLLIGGGIMSATLGTYLRELEPEWSMTMVERLEGVAQESSNGWNNAGTGHSALMELNYTPQNADGSISIEKAVAINEAFQISRQFWAHQVERGVLRTPRSFINTVPHMSFVWGEDNVNFLRARYAALQQSSLFRGMRYSEDHAQIKEWAPLVMEGRDPQQKVAATRTEIGTDVNYGEITRQLIASLQKKSNFSLQLSSEVRALKRNDDNTWTVTVADLKNGTAQNIRAKFVFIGAGGAALKLLQESGIPEAKDYAGFPVGGQFLVSENPDVVNHHLAKVYGKASVGAPPMSVPHIDTRVLDGKRVVLFGPFATFSTKFLKNGSLWDLMSSTTTSNVMPMMHVGLDNFDLVKYLVSQVMLSEEDRFEALKEYYPQAKKEDWRLWQAGQRVQIIKRDADKGGVLRLGTEVVSDQQGTIAALLGASPGASTAAPIMLNLLEKVFGDRVSSPQWQATLKAIVPSYGRKLNGDVAATERELQYTSEVLGLKYDKPQAADSTPKPQLKPQPVQKEVADIAL</sequence>
<comment type="catalytic activity">
    <reaction evidence="1">
        <text>(S)-malate + a quinone = a quinol + oxaloacetate</text>
        <dbReference type="Rhea" id="RHEA:46012"/>
        <dbReference type="ChEBI" id="CHEBI:15589"/>
        <dbReference type="ChEBI" id="CHEBI:16452"/>
        <dbReference type="ChEBI" id="CHEBI:24646"/>
        <dbReference type="ChEBI" id="CHEBI:132124"/>
        <dbReference type="EC" id="1.1.5.4"/>
    </reaction>
</comment>
<comment type="cofactor">
    <cofactor evidence="1">
        <name>FAD</name>
        <dbReference type="ChEBI" id="CHEBI:57692"/>
    </cofactor>
</comment>
<comment type="pathway">
    <text evidence="1">Carbohydrate metabolism; tricarboxylic acid cycle; oxaloacetate from (S)-malate (quinone route): step 1/1.</text>
</comment>
<comment type="similarity">
    <text evidence="1">Belongs to the MQO family.</text>
</comment>
<accession>B5YX02</accession>
<reference key="1">
    <citation type="journal article" date="2011" name="Proc. Natl. Acad. Sci. U.S.A.">
        <title>Genomic anatomy of Escherichia coli O157:H7 outbreaks.</title>
        <authorList>
            <person name="Eppinger M."/>
            <person name="Mammel M.K."/>
            <person name="Leclerc J.E."/>
            <person name="Ravel J."/>
            <person name="Cebula T.A."/>
        </authorList>
    </citation>
    <scope>NUCLEOTIDE SEQUENCE [LARGE SCALE GENOMIC DNA]</scope>
    <source>
        <strain>EC4115 / EHEC</strain>
    </source>
</reference>
<evidence type="ECO:0000255" key="1">
    <source>
        <dbReference type="HAMAP-Rule" id="MF_00212"/>
    </source>
</evidence>
<evidence type="ECO:0000256" key="2">
    <source>
        <dbReference type="SAM" id="MobiDB-lite"/>
    </source>
</evidence>
<dbReference type="EC" id="1.1.5.4" evidence="1"/>
<dbReference type="EMBL" id="CP001164">
    <property type="protein sequence ID" value="ACI36870.1"/>
    <property type="molecule type" value="Genomic_DNA"/>
</dbReference>
<dbReference type="RefSeq" id="WP_000758066.1">
    <property type="nucleotide sequence ID" value="NC_011353.1"/>
</dbReference>
<dbReference type="SMR" id="B5YX02"/>
<dbReference type="KEGG" id="ecf:ECH74115_3348"/>
<dbReference type="HOGENOM" id="CLU_028151_0_0_6"/>
<dbReference type="UniPathway" id="UPA00223">
    <property type="reaction ID" value="UER01008"/>
</dbReference>
<dbReference type="GO" id="GO:0047545">
    <property type="term" value="F:2-hydroxyglutarate dehydrogenase activity"/>
    <property type="evidence" value="ECO:0007669"/>
    <property type="project" value="TreeGrafter"/>
</dbReference>
<dbReference type="GO" id="GO:0008924">
    <property type="term" value="F:L-malate dehydrogenase (quinone) activity"/>
    <property type="evidence" value="ECO:0007669"/>
    <property type="project" value="UniProtKB-UniRule"/>
</dbReference>
<dbReference type="GO" id="GO:0006099">
    <property type="term" value="P:tricarboxylic acid cycle"/>
    <property type="evidence" value="ECO:0007669"/>
    <property type="project" value="UniProtKB-UniRule"/>
</dbReference>
<dbReference type="Gene3D" id="3.30.9.10">
    <property type="entry name" value="D-Amino Acid Oxidase, subunit A, domain 2"/>
    <property type="match status" value="1"/>
</dbReference>
<dbReference type="Gene3D" id="3.50.50.60">
    <property type="entry name" value="FAD/NAD(P)-binding domain"/>
    <property type="match status" value="1"/>
</dbReference>
<dbReference type="HAMAP" id="MF_00212">
    <property type="entry name" value="MQO"/>
    <property type="match status" value="1"/>
</dbReference>
<dbReference type="InterPro" id="IPR036188">
    <property type="entry name" value="FAD/NAD-bd_sf"/>
</dbReference>
<dbReference type="InterPro" id="IPR006231">
    <property type="entry name" value="MQO"/>
</dbReference>
<dbReference type="NCBIfam" id="TIGR01320">
    <property type="entry name" value="mal_quin_oxido"/>
    <property type="match status" value="1"/>
</dbReference>
<dbReference type="NCBIfam" id="NF003603">
    <property type="entry name" value="PRK05257.1-1"/>
    <property type="match status" value="1"/>
</dbReference>
<dbReference type="NCBIfam" id="NF003605">
    <property type="entry name" value="PRK05257.1-4"/>
    <property type="match status" value="1"/>
</dbReference>
<dbReference type="NCBIfam" id="NF003606">
    <property type="entry name" value="PRK05257.2-1"/>
    <property type="match status" value="1"/>
</dbReference>
<dbReference type="NCBIfam" id="NF003608">
    <property type="entry name" value="PRK05257.2-4"/>
    <property type="match status" value="1"/>
</dbReference>
<dbReference type="NCBIfam" id="NF003611">
    <property type="entry name" value="PRK05257.3-2"/>
    <property type="match status" value="1"/>
</dbReference>
<dbReference type="NCBIfam" id="NF009875">
    <property type="entry name" value="PRK13339.1"/>
    <property type="match status" value="1"/>
</dbReference>
<dbReference type="PANTHER" id="PTHR43104">
    <property type="entry name" value="L-2-HYDROXYGLUTARATE DEHYDROGENASE, MITOCHONDRIAL"/>
    <property type="match status" value="1"/>
</dbReference>
<dbReference type="PANTHER" id="PTHR43104:SF2">
    <property type="entry name" value="L-2-HYDROXYGLUTARATE DEHYDROGENASE, MITOCHONDRIAL"/>
    <property type="match status" value="1"/>
</dbReference>
<dbReference type="Pfam" id="PF06039">
    <property type="entry name" value="Mqo"/>
    <property type="match status" value="1"/>
</dbReference>
<dbReference type="SUPFAM" id="SSF51905">
    <property type="entry name" value="FAD/NAD(P)-binding domain"/>
    <property type="match status" value="1"/>
</dbReference>
<organism>
    <name type="scientific">Escherichia coli O157:H7 (strain EC4115 / EHEC)</name>
    <dbReference type="NCBI Taxonomy" id="444450"/>
    <lineage>
        <taxon>Bacteria</taxon>
        <taxon>Pseudomonadati</taxon>
        <taxon>Pseudomonadota</taxon>
        <taxon>Gammaproteobacteria</taxon>
        <taxon>Enterobacterales</taxon>
        <taxon>Enterobacteriaceae</taxon>
        <taxon>Escherichia</taxon>
    </lineage>
</organism>
<keyword id="KW-0274">FAD</keyword>
<keyword id="KW-0285">Flavoprotein</keyword>
<keyword id="KW-0560">Oxidoreductase</keyword>
<keyword id="KW-0816">Tricarboxylic acid cycle</keyword>
<proteinExistence type="inferred from homology"/>
<gene>
    <name evidence="1" type="primary">mqo</name>
    <name type="ordered locus">ECH74115_3348</name>
</gene>
<protein>
    <recommendedName>
        <fullName evidence="1">Probable malate:quinone oxidoreductase</fullName>
        <ecNumber evidence="1">1.1.5.4</ecNumber>
    </recommendedName>
    <alternativeName>
        <fullName evidence="1">MQO</fullName>
    </alternativeName>
    <alternativeName>
        <fullName evidence="1">Malate dehydrogenase [quinone]</fullName>
    </alternativeName>
</protein>
<feature type="chain" id="PRO_1000099869" description="Probable malate:quinone oxidoreductase">
    <location>
        <begin position="1"/>
        <end position="548"/>
    </location>
</feature>
<feature type="region of interest" description="Disordered" evidence="2">
    <location>
        <begin position="521"/>
        <end position="548"/>
    </location>
</feature>
<feature type="compositionally biased region" description="Low complexity" evidence="2">
    <location>
        <begin position="530"/>
        <end position="541"/>
    </location>
</feature>
<name>MQO_ECO5E</name>